<protein>
    <recommendedName>
        <fullName evidence="1">Phosphate import ATP-binding protein PstB 1</fullName>
        <ecNumber evidence="1">7.3.2.1</ecNumber>
    </recommendedName>
    <alternativeName>
        <fullName evidence="1">ABC phosphate transporter 1</fullName>
    </alternativeName>
    <alternativeName>
        <fullName evidence="1">Phosphate-transporting ATPase 1</fullName>
    </alternativeName>
</protein>
<organism>
    <name type="scientific">Shewanella oneidensis (strain ATCC 700550 / JCM 31522 / CIP 106686 / LMG 19005 / NCIMB 14063 / MR-1)</name>
    <dbReference type="NCBI Taxonomy" id="211586"/>
    <lineage>
        <taxon>Bacteria</taxon>
        <taxon>Pseudomonadati</taxon>
        <taxon>Pseudomonadota</taxon>
        <taxon>Gammaproteobacteria</taxon>
        <taxon>Alteromonadales</taxon>
        <taxon>Shewanellaceae</taxon>
        <taxon>Shewanella</taxon>
    </lineage>
</organism>
<reference key="1">
    <citation type="journal article" date="2002" name="Nat. Biotechnol.">
        <title>Genome sequence of the dissimilatory metal ion-reducing bacterium Shewanella oneidensis.</title>
        <authorList>
            <person name="Heidelberg J.F."/>
            <person name="Paulsen I.T."/>
            <person name="Nelson K.E."/>
            <person name="Gaidos E.J."/>
            <person name="Nelson W.C."/>
            <person name="Read T.D."/>
            <person name="Eisen J.A."/>
            <person name="Seshadri R."/>
            <person name="Ward N.L."/>
            <person name="Methe B.A."/>
            <person name="Clayton R.A."/>
            <person name="Meyer T."/>
            <person name="Tsapin A."/>
            <person name="Scott J."/>
            <person name="Beanan M.J."/>
            <person name="Brinkac L.M."/>
            <person name="Daugherty S.C."/>
            <person name="DeBoy R.T."/>
            <person name="Dodson R.J."/>
            <person name="Durkin A.S."/>
            <person name="Haft D.H."/>
            <person name="Kolonay J.F."/>
            <person name="Madupu R."/>
            <person name="Peterson J.D."/>
            <person name="Umayam L.A."/>
            <person name="White O."/>
            <person name="Wolf A.M."/>
            <person name="Vamathevan J.J."/>
            <person name="Weidman J.F."/>
            <person name="Impraim M."/>
            <person name="Lee K."/>
            <person name="Berry K.J."/>
            <person name="Lee C."/>
            <person name="Mueller J."/>
            <person name="Khouri H.M."/>
            <person name="Gill J."/>
            <person name="Utterback T.R."/>
            <person name="McDonald L.A."/>
            <person name="Feldblyum T.V."/>
            <person name="Smith H.O."/>
            <person name="Venter J.C."/>
            <person name="Nealson K.H."/>
            <person name="Fraser C.M."/>
        </authorList>
    </citation>
    <scope>NUCLEOTIDE SEQUENCE [LARGE SCALE GENOMIC DNA]</scope>
    <source>
        <strain>ATCC 700550 / JCM 31522 / CIP 106686 / LMG 19005 / NCIMB 14063 / MR-1</strain>
    </source>
</reference>
<accession>Q8EG82</accession>
<proteinExistence type="inferred from homology"/>
<gene>
    <name evidence="1" type="primary">pstB1</name>
    <name type="synonym">pstB-1</name>
    <name type="ordered locus">SO_1725</name>
</gene>
<dbReference type="EC" id="7.3.2.1" evidence="1"/>
<dbReference type="EMBL" id="AE014299">
    <property type="protein sequence ID" value="AAN54779.2"/>
    <property type="molecule type" value="Genomic_DNA"/>
</dbReference>
<dbReference type="RefSeq" id="NP_717335.2">
    <property type="nucleotide sequence ID" value="NC_004347.2"/>
</dbReference>
<dbReference type="RefSeq" id="WP_011071864.1">
    <property type="nucleotide sequence ID" value="NC_004347.2"/>
</dbReference>
<dbReference type="SMR" id="Q8EG82"/>
<dbReference type="STRING" id="211586.SO_1725"/>
<dbReference type="PaxDb" id="211586-SO_1725"/>
<dbReference type="KEGG" id="son:SO_1725"/>
<dbReference type="PATRIC" id="fig|211586.12.peg.1659"/>
<dbReference type="eggNOG" id="COG1117">
    <property type="taxonomic scope" value="Bacteria"/>
</dbReference>
<dbReference type="HOGENOM" id="CLU_000604_1_22_6"/>
<dbReference type="OrthoDB" id="9802264at2"/>
<dbReference type="PhylomeDB" id="Q8EG82"/>
<dbReference type="BioCyc" id="SONE211586:G1GMP-1584-MONOMER"/>
<dbReference type="Proteomes" id="UP000008186">
    <property type="component" value="Chromosome"/>
</dbReference>
<dbReference type="GO" id="GO:0005886">
    <property type="term" value="C:plasma membrane"/>
    <property type="evidence" value="ECO:0007669"/>
    <property type="project" value="UniProtKB-SubCell"/>
</dbReference>
<dbReference type="GO" id="GO:0005524">
    <property type="term" value="F:ATP binding"/>
    <property type="evidence" value="ECO:0007669"/>
    <property type="project" value="UniProtKB-KW"/>
</dbReference>
<dbReference type="GO" id="GO:0016887">
    <property type="term" value="F:ATP hydrolysis activity"/>
    <property type="evidence" value="ECO:0007669"/>
    <property type="project" value="InterPro"/>
</dbReference>
<dbReference type="GO" id="GO:0015415">
    <property type="term" value="F:ATPase-coupled phosphate ion transmembrane transporter activity"/>
    <property type="evidence" value="ECO:0007669"/>
    <property type="project" value="UniProtKB-EC"/>
</dbReference>
<dbReference type="GO" id="GO:0035435">
    <property type="term" value="P:phosphate ion transmembrane transport"/>
    <property type="evidence" value="ECO:0007669"/>
    <property type="project" value="InterPro"/>
</dbReference>
<dbReference type="CDD" id="cd03260">
    <property type="entry name" value="ABC_PstB_phosphate_transporter"/>
    <property type="match status" value="1"/>
</dbReference>
<dbReference type="FunFam" id="3.40.50.300:FF:000132">
    <property type="entry name" value="Phosphate import ATP-binding protein PstB"/>
    <property type="match status" value="1"/>
</dbReference>
<dbReference type="Gene3D" id="3.40.50.300">
    <property type="entry name" value="P-loop containing nucleotide triphosphate hydrolases"/>
    <property type="match status" value="1"/>
</dbReference>
<dbReference type="InterPro" id="IPR003593">
    <property type="entry name" value="AAA+_ATPase"/>
</dbReference>
<dbReference type="InterPro" id="IPR003439">
    <property type="entry name" value="ABC_transporter-like_ATP-bd"/>
</dbReference>
<dbReference type="InterPro" id="IPR017871">
    <property type="entry name" value="ABC_transporter-like_CS"/>
</dbReference>
<dbReference type="InterPro" id="IPR027417">
    <property type="entry name" value="P-loop_NTPase"/>
</dbReference>
<dbReference type="InterPro" id="IPR005670">
    <property type="entry name" value="PstB-like"/>
</dbReference>
<dbReference type="NCBIfam" id="TIGR00972">
    <property type="entry name" value="3a0107s01c2"/>
    <property type="match status" value="1"/>
</dbReference>
<dbReference type="PANTHER" id="PTHR43423">
    <property type="entry name" value="ABC TRANSPORTER I FAMILY MEMBER 17"/>
    <property type="match status" value="1"/>
</dbReference>
<dbReference type="PANTHER" id="PTHR43423:SF12">
    <property type="entry name" value="IRON EXPORT ATP-BINDING PROTEIN FETA-RELATED"/>
    <property type="match status" value="1"/>
</dbReference>
<dbReference type="Pfam" id="PF00005">
    <property type="entry name" value="ABC_tran"/>
    <property type="match status" value="1"/>
</dbReference>
<dbReference type="SMART" id="SM00382">
    <property type="entry name" value="AAA"/>
    <property type="match status" value="1"/>
</dbReference>
<dbReference type="SUPFAM" id="SSF52540">
    <property type="entry name" value="P-loop containing nucleoside triphosphate hydrolases"/>
    <property type="match status" value="1"/>
</dbReference>
<dbReference type="PROSITE" id="PS00211">
    <property type="entry name" value="ABC_TRANSPORTER_1"/>
    <property type="match status" value="1"/>
</dbReference>
<dbReference type="PROSITE" id="PS50893">
    <property type="entry name" value="ABC_TRANSPORTER_2"/>
    <property type="match status" value="1"/>
</dbReference>
<dbReference type="PROSITE" id="PS51238">
    <property type="entry name" value="PSTB"/>
    <property type="match status" value="1"/>
</dbReference>
<feature type="chain" id="PRO_0000092874" description="Phosphate import ATP-binding protein PstB 1">
    <location>
        <begin position="1"/>
        <end position="272"/>
    </location>
</feature>
<feature type="domain" description="ABC transporter" evidence="1">
    <location>
        <begin position="26"/>
        <end position="267"/>
    </location>
</feature>
<feature type="binding site" evidence="1">
    <location>
        <begin position="58"/>
        <end position="65"/>
    </location>
    <ligand>
        <name>ATP</name>
        <dbReference type="ChEBI" id="CHEBI:30616"/>
    </ligand>
</feature>
<comment type="function">
    <text evidence="1">Part of the ABC transporter complex PstSACB involved in phosphate import. Responsible for energy coupling to the transport system.</text>
</comment>
<comment type="catalytic activity">
    <reaction evidence="1">
        <text>phosphate(out) + ATP + H2O = ADP + 2 phosphate(in) + H(+)</text>
        <dbReference type="Rhea" id="RHEA:24440"/>
        <dbReference type="ChEBI" id="CHEBI:15377"/>
        <dbReference type="ChEBI" id="CHEBI:15378"/>
        <dbReference type="ChEBI" id="CHEBI:30616"/>
        <dbReference type="ChEBI" id="CHEBI:43474"/>
        <dbReference type="ChEBI" id="CHEBI:456216"/>
        <dbReference type="EC" id="7.3.2.1"/>
    </reaction>
</comment>
<comment type="subunit">
    <text evidence="1">The complex is composed of two ATP-binding proteins (PstB), two transmembrane proteins (PstC and PstA) and a solute-binding protein (PstS).</text>
</comment>
<comment type="subcellular location">
    <subcellularLocation>
        <location evidence="1">Cell inner membrane</location>
        <topology evidence="1">Peripheral membrane protein</topology>
    </subcellularLocation>
</comment>
<comment type="similarity">
    <text evidence="1">Belongs to the ABC transporter superfamily. Phosphate importer (TC 3.A.1.7) family.</text>
</comment>
<sequence length="272" mass="30643">MISIDSTAMKTNSFDLANLSQDDTALEIRNLDLRYGDKQALFNVSMKIPKKQVTAFIGPSGCGKSTLLRCINRMNDLVDNCHIDGEILLHGQNIYDKRIDVAALRRNVGMVFQRPNPFPKSIYENVVYGLRLQGINNRRELDEAAERSLRGAAIWDEVKDRLHDNAFGLSGGQQQRLVIARAIAIEPEVLLLDEPTSALDPISTLTIEELITELKTKYTVVIVTHNMQQAARVSDQTAFMYMGELVEYADTNTIFTTPKKRKTEDYITGRYG</sequence>
<keyword id="KW-0067">ATP-binding</keyword>
<keyword id="KW-0997">Cell inner membrane</keyword>
<keyword id="KW-1003">Cell membrane</keyword>
<keyword id="KW-0472">Membrane</keyword>
<keyword id="KW-0547">Nucleotide-binding</keyword>
<keyword id="KW-0592">Phosphate transport</keyword>
<keyword id="KW-1185">Reference proteome</keyword>
<keyword id="KW-1278">Translocase</keyword>
<keyword id="KW-0813">Transport</keyword>
<evidence type="ECO:0000255" key="1">
    <source>
        <dbReference type="HAMAP-Rule" id="MF_01702"/>
    </source>
</evidence>
<name>PSTB1_SHEON</name>